<reference key="1">
    <citation type="journal article" date="1997" name="Mol. Phylogenet. Evol.">
        <title>Molecular evolution of the cottoid fish endemic to Lake Baikal deduced from nuclear DNA evidence.</title>
        <authorList>
            <person name="Hunt D.M."/>
            <person name="Fitzgibbon J."/>
            <person name="Slobodyanyuk S.J."/>
            <person name="Bowmaker J.K."/>
            <person name="Dulai K.S."/>
        </authorList>
    </citation>
    <scope>NUCLEOTIDE SEQUENCE [GENOMIC DNA]</scope>
</reference>
<keyword id="KW-0966">Cell projection</keyword>
<keyword id="KW-0157">Chromophore</keyword>
<keyword id="KW-1015">Disulfide bond</keyword>
<keyword id="KW-0297">G-protein coupled receptor</keyword>
<keyword id="KW-0325">Glycoprotein</keyword>
<keyword id="KW-0449">Lipoprotein</keyword>
<keyword id="KW-0472">Membrane</keyword>
<keyword id="KW-0564">Palmitate</keyword>
<keyword id="KW-0597">Phosphoprotein</keyword>
<keyword id="KW-0600">Photoreceptor protein</keyword>
<keyword id="KW-0675">Receptor</keyword>
<keyword id="KW-0681">Retinal protein</keyword>
<keyword id="KW-0716">Sensory transduction</keyword>
<keyword id="KW-0807">Transducer</keyword>
<keyword id="KW-0812">Transmembrane</keyword>
<keyword id="KW-1133">Transmembrane helix</keyword>
<keyword id="KW-0844">Vision</keyword>
<name>OPSD_COTIN</name>
<organism>
    <name type="scientific">Cottocomephorus inermis</name>
    <name type="common">Longfin Baikal sculpin</name>
    <dbReference type="NCBI Taxonomy" id="61627"/>
    <lineage>
        <taxon>Eukaryota</taxon>
        <taxon>Metazoa</taxon>
        <taxon>Chordata</taxon>
        <taxon>Craniata</taxon>
        <taxon>Vertebrata</taxon>
        <taxon>Euteleostomi</taxon>
        <taxon>Actinopterygii</taxon>
        <taxon>Neopterygii</taxon>
        <taxon>Teleostei</taxon>
        <taxon>Neoteleostei</taxon>
        <taxon>Acanthomorphata</taxon>
        <taxon>Eupercaria</taxon>
        <taxon>Perciformes</taxon>
        <taxon>Cottioidei</taxon>
        <taxon>Cottales</taxon>
        <taxon>Cottidae</taxon>
        <taxon>Cottocomephorus</taxon>
    </lineage>
</organism>
<comment type="function">
    <text evidence="1 2 3">Photoreceptor required for image-forming vision at low light intensity. While most salt water fish species use retinal as chromophore, most freshwater fish use 3-dehydroretinal, or a mixture of retinal and 3-dehydroretinal (By similarity). Light-induced isomerization of 11-cis to all-trans retinal triggers a conformational change that activates signaling via G-proteins. Subsequent receptor phosphorylation mediates displacement of the bound G-protein alpha subunit by arrestin and terminates signaling (By similarity).</text>
</comment>
<comment type="subcellular location">
    <subcellularLocation>
        <location evidence="2">Membrane</location>
        <topology evidence="2">Multi-pass membrane protein</topology>
    </subcellularLocation>
    <subcellularLocation>
        <location evidence="4">Cell projection</location>
        <location evidence="4">Cilium</location>
        <location evidence="4">Photoreceptor outer segment</location>
    </subcellularLocation>
    <text evidence="2">Synthesized in the inner segment (IS) of rod photoreceptor cells before vectorial transport to disk membranes in the rod outer segment (OS) photosensory cilia.</text>
</comment>
<comment type="PTM">
    <text evidence="1">Phosphorylated on some or all of the serine and threonine residues present in the C-terminal region.</text>
</comment>
<comment type="PTM">
    <text evidence="1">Contains one covalently linked retinal chromophore.</text>
</comment>
<comment type="similarity">
    <text evidence="6">Belongs to the G-protein coupled receptor 1 family. Opsin subfamily.</text>
</comment>
<sequence>YLVNPAAYAALGAYMFLLILIGFPVNFLTLYVTIEHKKLRTPLNYILLNLAVANLFMVLGGFTTTMYTSMHGYFVLGRLGCNLEGFFATMGGEIALWSLVVLAIERWIVVCKPISNFRFTEDHAIMGLAFTWVMALSCAVPPLVGWSRYIPEGMQCSCGVDYYTRAEGFNNESFVIYMFIVHFLTPLIIISFCYGRLLCAVKEAAAAQQESETTQRAEREVSRMVVMMVISFLMCWLPYASVAWYIFCNQGSEFGPIFMTLPAFFAKSSAIYNPLIYICMNKQFRHCMI</sequence>
<gene>
    <name type="primary">rho</name>
</gene>
<accession>O42330</accession>
<protein>
    <recommendedName>
        <fullName>Rhodopsin</fullName>
    </recommendedName>
</protein>
<dbReference type="EMBL" id="U97266">
    <property type="protein sequence ID" value="AAB61720.1"/>
    <property type="molecule type" value="Genomic_DNA"/>
</dbReference>
<dbReference type="SMR" id="O42330"/>
<dbReference type="GlyCosmos" id="O42330">
    <property type="glycosylation" value="1 site, No reported glycans"/>
</dbReference>
<dbReference type="GO" id="GO:0016020">
    <property type="term" value="C:membrane"/>
    <property type="evidence" value="ECO:0000250"/>
    <property type="project" value="UniProtKB"/>
</dbReference>
<dbReference type="GO" id="GO:0097381">
    <property type="term" value="C:photoreceptor disc membrane"/>
    <property type="evidence" value="ECO:0000250"/>
    <property type="project" value="UniProtKB"/>
</dbReference>
<dbReference type="GO" id="GO:0005886">
    <property type="term" value="C:plasma membrane"/>
    <property type="evidence" value="ECO:0000250"/>
    <property type="project" value="UniProtKB"/>
</dbReference>
<dbReference type="GO" id="GO:0005502">
    <property type="term" value="F:11-cis retinal binding"/>
    <property type="evidence" value="ECO:0000250"/>
    <property type="project" value="UniProtKB"/>
</dbReference>
<dbReference type="GO" id="GO:0008020">
    <property type="term" value="F:G protein-coupled photoreceptor activity"/>
    <property type="evidence" value="ECO:0000250"/>
    <property type="project" value="UniProtKB"/>
</dbReference>
<dbReference type="GO" id="GO:0016038">
    <property type="term" value="P:absorption of visible light"/>
    <property type="evidence" value="ECO:0000250"/>
    <property type="project" value="UniProtKB"/>
</dbReference>
<dbReference type="GO" id="GO:0016056">
    <property type="term" value="P:G protein-coupled opsin signaling pathway"/>
    <property type="evidence" value="ECO:0000250"/>
    <property type="project" value="UniProtKB"/>
</dbReference>
<dbReference type="GO" id="GO:0007601">
    <property type="term" value="P:visual perception"/>
    <property type="evidence" value="ECO:0007669"/>
    <property type="project" value="UniProtKB-KW"/>
</dbReference>
<dbReference type="CDD" id="cd15080">
    <property type="entry name" value="7tmA_MWS_opsin"/>
    <property type="match status" value="1"/>
</dbReference>
<dbReference type="FunFam" id="1.20.1070.10:FF:000357">
    <property type="entry name" value="Rhodopsin"/>
    <property type="match status" value="1"/>
</dbReference>
<dbReference type="Gene3D" id="1.20.1070.10">
    <property type="entry name" value="Rhodopsin 7-helix transmembrane proteins"/>
    <property type="match status" value="1"/>
</dbReference>
<dbReference type="InterPro" id="IPR050125">
    <property type="entry name" value="GPCR_opsins"/>
</dbReference>
<dbReference type="InterPro" id="IPR000276">
    <property type="entry name" value="GPCR_Rhodpsn"/>
</dbReference>
<dbReference type="InterPro" id="IPR017452">
    <property type="entry name" value="GPCR_Rhodpsn_7TM"/>
</dbReference>
<dbReference type="InterPro" id="IPR001760">
    <property type="entry name" value="Opsin"/>
</dbReference>
<dbReference type="InterPro" id="IPR027430">
    <property type="entry name" value="Retinal_BS"/>
</dbReference>
<dbReference type="InterPro" id="IPR000732">
    <property type="entry name" value="Rhodopsin"/>
</dbReference>
<dbReference type="PANTHER" id="PTHR24240">
    <property type="entry name" value="OPSIN"/>
    <property type="match status" value="1"/>
</dbReference>
<dbReference type="Pfam" id="PF00001">
    <property type="entry name" value="7tm_1"/>
    <property type="match status" value="1"/>
</dbReference>
<dbReference type="PRINTS" id="PR00237">
    <property type="entry name" value="GPCRRHODOPSN"/>
</dbReference>
<dbReference type="PRINTS" id="PR00238">
    <property type="entry name" value="OPSIN"/>
</dbReference>
<dbReference type="PRINTS" id="PR00579">
    <property type="entry name" value="RHODOPSIN"/>
</dbReference>
<dbReference type="SUPFAM" id="SSF81321">
    <property type="entry name" value="Family A G protein-coupled receptor-like"/>
    <property type="match status" value="1"/>
</dbReference>
<dbReference type="PROSITE" id="PS00237">
    <property type="entry name" value="G_PROTEIN_RECEP_F1_1"/>
    <property type="match status" value="1"/>
</dbReference>
<dbReference type="PROSITE" id="PS50262">
    <property type="entry name" value="G_PROTEIN_RECEP_F1_2"/>
    <property type="match status" value="1"/>
</dbReference>
<dbReference type="PROSITE" id="PS00238">
    <property type="entry name" value="OPSIN"/>
    <property type="match status" value="1"/>
</dbReference>
<feature type="chain" id="PRO_0000197665" description="Rhodopsin">
    <location>
        <begin position="1" status="less than"/>
        <end position="289" status="greater than"/>
    </location>
</feature>
<feature type="topological domain" description="Extracellular" evidence="7">
    <location>
        <begin position="1" status="less than"/>
        <end position="7"/>
    </location>
</feature>
<feature type="transmembrane region" description="Helical; Name=1" evidence="1">
    <location>
        <begin position="8"/>
        <end position="32"/>
    </location>
</feature>
<feature type="topological domain" description="Cytoplasmic" evidence="7">
    <location>
        <begin position="33"/>
        <end position="44"/>
    </location>
</feature>
<feature type="transmembrane region" description="Helical; Name=2" evidence="1">
    <location>
        <begin position="45"/>
        <end position="67"/>
    </location>
</feature>
<feature type="topological domain" description="Extracellular" evidence="7">
    <location>
        <begin position="68"/>
        <end position="81"/>
    </location>
</feature>
<feature type="transmembrane region" description="Helical; Name=3" evidence="1">
    <location>
        <begin position="82"/>
        <end position="104"/>
    </location>
</feature>
<feature type="topological domain" description="Cytoplasmic" evidence="7">
    <location>
        <begin position="105"/>
        <end position="123"/>
    </location>
</feature>
<feature type="transmembrane region" description="Helical; Name=4" evidence="1">
    <location>
        <begin position="124"/>
        <end position="144"/>
    </location>
</feature>
<feature type="topological domain" description="Extracellular" evidence="7">
    <location>
        <begin position="145"/>
        <end position="173"/>
    </location>
</feature>
<feature type="transmembrane region" description="Helical; Name=5" evidence="1">
    <location>
        <begin position="174"/>
        <end position="195"/>
    </location>
</feature>
<feature type="topological domain" description="Cytoplasmic" evidence="7">
    <location>
        <begin position="196"/>
        <end position="223"/>
    </location>
</feature>
<feature type="transmembrane region" description="Helical; Name=6" evidence="1">
    <location>
        <begin position="224"/>
        <end position="245"/>
    </location>
</feature>
<feature type="topological domain" description="Extracellular" evidence="7">
    <location>
        <begin position="246"/>
        <end position="257"/>
    </location>
</feature>
<feature type="transmembrane region" description="Helical; Name=7" evidence="1">
    <location>
        <begin position="258"/>
        <end position="279"/>
    </location>
</feature>
<feature type="topological domain" description="Cytoplasmic" evidence="7">
    <location>
        <begin position="280"/>
        <end position="289" status="greater than"/>
    </location>
</feature>
<feature type="short sequence motif" description="'Ionic lock' involved in activated form stabilization" evidence="1">
    <location>
        <begin position="105"/>
        <end position="107"/>
    </location>
</feature>
<feature type="site" description="Plays an important role in the conformation switch to the active conformation" evidence="1">
    <location>
        <position position="84"/>
    </location>
</feature>
<feature type="modified residue" description="N6-(retinylidene)lysine" evidence="1">
    <location>
        <position position="267"/>
    </location>
</feature>
<feature type="glycosylation site" description="N-linked (GlcNAc...) asparagine" evidence="5">
    <location>
        <position position="171"/>
    </location>
</feature>
<feature type="disulfide bond" evidence="6">
    <location>
        <begin position="81"/>
        <end position="158"/>
    </location>
</feature>
<feature type="non-terminal residue">
    <location>
        <position position="1"/>
    </location>
</feature>
<feature type="non-terminal residue">
    <location>
        <position position="289"/>
    </location>
</feature>
<evidence type="ECO:0000250" key="1">
    <source>
        <dbReference type="UniProtKB" id="P02699"/>
    </source>
</evidence>
<evidence type="ECO:0000250" key="2">
    <source>
        <dbReference type="UniProtKB" id="P08100"/>
    </source>
</evidence>
<evidence type="ECO:0000250" key="3">
    <source>
        <dbReference type="UniProtKB" id="P32309"/>
    </source>
</evidence>
<evidence type="ECO:0000250" key="4">
    <source>
        <dbReference type="UniProtKB" id="P35359"/>
    </source>
</evidence>
<evidence type="ECO:0000255" key="5"/>
<evidence type="ECO:0000255" key="6">
    <source>
        <dbReference type="PROSITE-ProRule" id="PRU00521"/>
    </source>
</evidence>
<evidence type="ECO:0000305" key="7"/>
<proteinExistence type="inferred from homology"/>